<protein>
    <recommendedName>
        <fullName>Uncharacterized protein YqhL</fullName>
    </recommendedName>
</protein>
<name>YQHL_BACSU</name>
<comment type="subcellular location">
    <subcellularLocation>
        <location evidence="3">Cell membrane</location>
        <topology evidence="3">Single-pass membrane protein</topology>
    </subcellularLocation>
</comment>
<feature type="chain" id="PRO_0000049819" description="Uncharacterized protein YqhL">
    <location>
        <begin position="1"/>
        <end position="126"/>
    </location>
</feature>
<feature type="transmembrane region" description="Helical" evidence="1">
    <location>
        <begin position="3"/>
        <end position="23"/>
    </location>
</feature>
<feature type="domain" description="Rhodanese" evidence="2">
    <location>
        <begin position="39"/>
        <end position="123"/>
    </location>
</feature>
<feature type="sequence conflict" description="In Ref. 1; BAA12549." evidence="3" ref="1">
    <original>A</original>
    <variation>P</variation>
    <location>
        <position position="11"/>
    </location>
</feature>
<gene>
    <name type="primary">yqhL</name>
    <name type="ordered locus">BSU24540</name>
</gene>
<sequence length="126" mass="14565">MSNMIVLIIFAAFIIYMIASYVYQQRIMKTLTEEEFRAGYRKAQLIDVREPNEFEGGHILGARNIPLSQLKQRKNEIRTDKPVYLYCQNSVRSGRAAQTLRKNGCTEIYNLKGGFKKWGGKIKAKK</sequence>
<accession>P54510</accession>
<dbReference type="EMBL" id="D84432">
    <property type="protein sequence ID" value="BAA12549.1"/>
    <property type="molecule type" value="Genomic_DNA"/>
</dbReference>
<dbReference type="EMBL" id="AL009126">
    <property type="protein sequence ID" value="CAB14385.2"/>
    <property type="molecule type" value="Genomic_DNA"/>
</dbReference>
<dbReference type="PIR" id="C69959">
    <property type="entry name" value="C69959"/>
</dbReference>
<dbReference type="RefSeq" id="NP_390334.2">
    <property type="nucleotide sequence ID" value="NC_000964.3"/>
</dbReference>
<dbReference type="RefSeq" id="WP_004398485.1">
    <property type="nucleotide sequence ID" value="NZ_OZ025638.1"/>
</dbReference>
<dbReference type="SMR" id="P54510"/>
<dbReference type="FunCoup" id="P54510">
    <property type="interactions" value="53"/>
</dbReference>
<dbReference type="STRING" id="224308.BSU24540"/>
<dbReference type="PaxDb" id="224308-BSU24540"/>
<dbReference type="EnsemblBacteria" id="CAB14385">
    <property type="protein sequence ID" value="CAB14385"/>
    <property type="gene ID" value="BSU_24540"/>
</dbReference>
<dbReference type="GeneID" id="938550"/>
<dbReference type="KEGG" id="bsu:BSU24540"/>
<dbReference type="PATRIC" id="fig|224308.179.peg.2672"/>
<dbReference type="eggNOG" id="COG0607">
    <property type="taxonomic scope" value="Bacteria"/>
</dbReference>
<dbReference type="InParanoid" id="P54510"/>
<dbReference type="OrthoDB" id="9808735at2"/>
<dbReference type="PhylomeDB" id="P54510"/>
<dbReference type="BioCyc" id="BSUB:BSU24540-MONOMER"/>
<dbReference type="Proteomes" id="UP000001570">
    <property type="component" value="Chromosome"/>
</dbReference>
<dbReference type="GO" id="GO:0005886">
    <property type="term" value="C:plasma membrane"/>
    <property type="evidence" value="ECO:0007669"/>
    <property type="project" value="UniProtKB-SubCell"/>
</dbReference>
<dbReference type="CDD" id="cd00158">
    <property type="entry name" value="RHOD"/>
    <property type="match status" value="1"/>
</dbReference>
<dbReference type="Gene3D" id="3.40.250.10">
    <property type="entry name" value="Rhodanese-like domain"/>
    <property type="match status" value="1"/>
</dbReference>
<dbReference type="InterPro" id="IPR050229">
    <property type="entry name" value="GlpE_sulfurtransferase"/>
</dbReference>
<dbReference type="InterPro" id="IPR001763">
    <property type="entry name" value="Rhodanese-like_dom"/>
</dbReference>
<dbReference type="InterPro" id="IPR036873">
    <property type="entry name" value="Rhodanese-like_dom_sf"/>
</dbReference>
<dbReference type="PANTHER" id="PTHR43031">
    <property type="entry name" value="FAD-DEPENDENT OXIDOREDUCTASE"/>
    <property type="match status" value="1"/>
</dbReference>
<dbReference type="PANTHER" id="PTHR43031:SF18">
    <property type="entry name" value="RHODANESE-RELATED SULFURTRANSFERASES"/>
    <property type="match status" value="1"/>
</dbReference>
<dbReference type="Pfam" id="PF00581">
    <property type="entry name" value="Rhodanese"/>
    <property type="match status" value="1"/>
</dbReference>
<dbReference type="SMART" id="SM00450">
    <property type="entry name" value="RHOD"/>
    <property type="match status" value="1"/>
</dbReference>
<dbReference type="SUPFAM" id="SSF52821">
    <property type="entry name" value="Rhodanese/Cell cycle control phosphatase"/>
    <property type="match status" value="1"/>
</dbReference>
<dbReference type="PROSITE" id="PS50206">
    <property type="entry name" value="RHODANESE_3"/>
    <property type="match status" value="1"/>
</dbReference>
<organism>
    <name type="scientific">Bacillus subtilis (strain 168)</name>
    <dbReference type="NCBI Taxonomy" id="224308"/>
    <lineage>
        <taxon>Bacteria</taxon>
        <taxon>Bacillati</taxon>
        <taxon>Bacillota</taxon>
        <taxon>Bacilli</taxon>
        <taxon>Bacillales</taxon>
        <taxon>Bacillaceae</taxon>
        <taxon>Bacillus</taxon>
    </lineage>
</organism>
<reference key="1">
    <citation type="journal article" date="1996" name="Microbiology">
        <title>Systematic sequencing of the 283 kb 210 degrees-232 degrees region of the Bacillus subtilis genome containing the skin element and many sporulation genes.</title>
        <authorList>
            <person name="Mizuno M."/>
            <person name="Masuda S."/>
            <person name="Takemaru K."/>
            <person name="Hosono S."/>
            <person name="Sato T."/>
            <person name="Takeuchi M."/>
            <person name="Kobayashi Y."/>
        </authorList>
    </citation>
    <scope>NUCLEOTIDE SEQUENCE [GENOMIC DNA]</scope>
    <source>
        <strain>168 / JH642</strain>
    </source>
</reference>
<reference key="2">
    <citation type="journal article" date="1997" name="Nature">
        <title>The complete genome sequence of the Gram-positive bacterium Bacillus subtilis.</title>
        <authorList>
            <person name="Kunst F."/>
            <person name="Ogasawara N."/>
            <person name="Moszer I."/>
            <person name="Albertini A.M."/>
            <person name="Alloni G."/>
            <person name="Azevedo V."/>
            <person name="Bertero M.G."/>
            <person name="Bessieres P."/>
            <person name="Bolotin A."/>
            <person name="Borchert S."/>
            <person name="Borriss R."/>
            <person name="Boursier L."/>
            <person name="Brans A."/>
            <person name="Braun M."/>
            <person name="Brignell S.C."/>
            <person name="Bron S."/>
            <person name="Brouillet S."/>
            <person name="Bruschi C.V."/>
            <person name="Caldwell B."/>
            <person name="Capuano V."/>
            <person name="Carter N.M."/>
            <person name="Choi S.-K."/>
            <person name="Codani J.-J."/>
            <person name="Connerton I.F."/>
            <person name="Cummings N.J."/>
            <person name="Daniel R.A."/>
            <person name="Denizot F."/>
            <person name="Devine K.M."/>
            <person name="Duesterhoeft A."/>
            <person name="Ehrlich S.D."/>
            <person name="Emmerson P.T."/>
            <person name="Entian K.-D."/>
            <person name="Errington J."/>
            <person name="Fabret C."/>
            <person name="Ferrari E."/>
            <person name="Foulger D."/>
            <person name="Fritz C."/>
            <person name="Fujita M."/>
            <person name="Fujita Y."/>
            <person name="Fuma S."/>
            <person name="Galizzi A."/>
            <person name="Galleron N."/>
            <person name="Ghim S.-Y."/>
            <person name="Glaser P."/>
            <person name="Goffeau A."/>
            <person name="Golightly E.J."/>
            <person name="Grandi G."/>
            <person name="Guiseppi G."/>
            <person name="Guy B.J."/>
            <person name="Haga K."/>
            <person name="Haiech J."/>
            <person name="Harwood C.R."/>
            <person name="Henaut A."/>
            <person name="Hilbert H."/>
            <person name="Holsappel S."/>
            <person name="Hosono S."/>
            <person name="Hullo M.-F."/>
            <person name="Itaya M."/>
            <person name="Jones L.-M."/>
            <person name="Joris B."/>
            <person name="Karamata D."/>
            <person name="Kasahara Y."/>
            <person name="Klaerr-Blanchard M."/>
            <person name="Klein C."/>
            <person name="Kobayashi Y."/>
            <person name="Koetter P."/>
            <person name="Koningstein G."/>
            <person name="Krogh S."/>
            <person name="Kumano M."/>
            <person name="Kurita K."/>
            <person name="Lapidus A."/>
            <person name="Lardinois S."/>
            <person name="Lauber J."/>
            <person name="Lazarevic V."/>
            <person name="Lee S.-M."/>
            <person name="Levine A."/>
            <person name="Liu H."/>
            <person name="Masuda S."/>
            <person name="Mauel C."/>
            <person name="Medigue C."/>
            <person name="Medina N."/>
            <person name="Mellado R.P."/>
            <person name="Mizuno M."/>
            <person name="Moestl D."/>
            <person name="Nakai S."/>
            <person name="Noback M."/>
            <person name="Noone D."/>
            <person name="O'Reilly M."/>
            <person name="Ogawa K."/>
            <person name="Ogiwara A."/>
            <person name="Oudega B."/>
            <person name="Park S.-H."/>
            <person name="Parro V."/>
            <person name="Pohl T.M."/>
            <person name="Portetelle D."/>
            <person name="Porwollik S."/>
            <person name="Prescott A.M."/>
            <person name="Presecan E."/>
            <person name="Pujic P."/>
            <person name="Purnelle B."/>
            <person name="Rapoport G."/>
            <person name="Rey M."/>
            <person name="Reynolds S."/>
            <person name="Rieger M."/>
            <person name="Rivolta C."/>
            <person name="Rocha E."/>
            <person name="Roche B."/>
            <person name="Rose M."/>
            <person name="Sadaie Y."/>
            <person name="Sato T."/>
            <person name="Scanlan E."/>
            <person name="Schleich S."/>
            <person name="Schroeter R."/>
            <person name="Scoffone F."/>
            <person name="Sekiguchi J."/>
            <person name="Sekowska A."/>
            <person name="Seror S.J."/>
            <person name="Serror P."/>
            <person name="Shin B.-S."/>
            <person name="Soldo B."/>
            <person name="Sorokin A."/>
            <person name="Tacconi E."/>
            <person name="Takagi T."/>
            <person name="Takahashi H."/>
            <person name="Takemaru K."/>
            <person name="Takeuchi M."/>
            <person name="Tamakoshi A."/>
            <person name="Tanaka T."/>
            <person name="Terpstra P."/>
            <person name="Tognoni A."/>
            <person name="Tosato V."/>
            <person name="Uchiyama S."/>
            <person name="Vandenbol M."/>
            <person name="Vannier F."/>
            <person name="Vassarotti A."/>
            <person name="Viari A."/>
            <person name="Wambutt R."/>
            <person name="Wedler E."/>
            <person name="Wedler H."/>
            <person name="Weitzenegger T."/>
            <person name="Winters P."/>
            <person name="Wipat A."/>
            <person name="Yamamoto H."/>
            <person name="Yamane K."/>
            <person name="Yasumoto K."/>
            <person name="Yata K."/>
            <person name="Yoshida K."/>
            <person name="Yoshikawa H.-F."/>
            <person name="Zumstein E."/>
            <person name="Yoshikawa H."/>
            <person name="Danchin A."/>
        </authorList>
    </citation>
    <scope>NUCLEOTIDE SEQUENCE [LARGE SCALE GENOMIC DNA]</scope>
    <source>
        <strain>168</strain>
    </source>
</reference>
<reference key="3">
    <citation type="journal article" date="2009" name="Microbiology">
        <title>From a consortium sequence to a unified sequence: the Bacillus subtilis 168 reference genome a decade later.</title>
        <authorList>
            <person name="Barbe V."/>
            <person name="Cruveiller S."/>
            <person name="Kunst F."/>
            <person name="Lenoble P."/>
            <person name="Meurice G."/>
            <person name="Sekowska A."/>
            <person name="Vallenet D."/>
            <person name="Wang T."/>
            <person name="Moszer I."/>
            <person name="Medigue C."/>
            <person name="Danchin A."/>
        </authorList>
    </citation>
    <scope>SEQUENCE REVISION TO 11</scope>
</reference>
<proteinExistence type="predicted"/>
<keyword id="KW-1003">Cell membrane</keyword>
<keyword id="KW-0472">Membrane</keyword>
<keyword id="KW-1185">Reference proteome</keyword>
<keyword id="KW-0812">Transmembrane</keyword>
<keyword id="KW-1133">Transmembrane helix</keyword>
<evidence type="ECO:0000255" key="1"/>
<evidence type="ECO:0000255" key="2">
    <source>
        <dbReference type="PROSITE-ProRule" id="PRU00173"/>
    </source>
</evidence>
<evidence type="ECO:0000305" key="3"/>